<organism>
    <name type="scientific">Herminiimonas arsenicoxydans</name>
    <dbReference type="NCBI Taxonomy" id="204773"/>
    <lineage>
        <taxon>Bacteria</taxon>
        <taxon>Pseudomonadati</taxon>
        <taxon>Pseudomonadota</taxon>
        <taxon>Betaproteobacteria</taxon>
        <taxon>Burkholderiales</taxon>
        <taxon>Oxalobacteraceae</taxon>
        <taxon>Herminiimonas</taxon>
    </lineage>
</organism>
<comment type="function">
    <text evidence="1">Catalyzes the reversible conversion of 2-phosphoglycerate (2-PG) into phosphoenolpyruvate (PEP). It is essential for the degradation of carbohydrates via glycolysis.</text>
</comment>
<comment type="catalytic activity">
    <reaction evidence="1">
        <text>(2R)-2-phosphoglycerate = phosphoenolpyruvate + H2O</text>
        <dbReference type="Rhea" id="RHEA:10164"/>
        <dbReference type="ChEBI" id="CHEBI:15377"/>
        <dbReference type="ChEBI" id="CHEBI:58289"/>
        <dbReference type="ChEBI" id="CHEBI:58702"/>
        <dbReference type="EC" id="4.2.1.11"/>
    </reaction>
</comment>
<comment type="cofactor">
    <cofactor evidence="1">
        <name>Mg(2+)</name>
        <dbReference type="ChEBI" id="CHEBI:18420"/>
    </cofactor>
    <text evidence="1">Binds a second Mg(2+) ion via substrate during catalysis.</text>
</comment>
<comment type="pathway">
    <text evidence="1">Carbohydrate degradation; glycolysis; pyruvate from D-glyceraldehyde 3-phosphate: step 4/5.</text>
</comment>
<comment type="subcellular location">
    <subcellularLocation>
        <location evidence="1">Cytoplasm</location>
    </subcellularLocation>
    <subcellularLocation>
        <location evidence="1">Secreted</location>
    </subcellularLocation>
    <subcellularLocation>
        <location evidence="1">Cell surface</location>
    </subcellularLocation>
    <text evidence="1">Fractions of enolase are present in both the cytoplasm and on the cell surface.</text>
</comment>
<comment type="similarity">
    <text evidence="1">Belongs to the enolase family.</text>
</comment>
<dbReference type="EC" id="4.2.1.11" evidence="1"/>
<dbReference type="EMBL" id="CU207211">
    <property type="protein sequence ID" value="CAL62324.1"/>
    <property type="molecule type" value="Genomic_DNA"/>
</dbReference>
<dbReference type="SMR" id="A4G737"/>
<dbReference type="STRING" id="204773.HEAR2188"/>
<dbReference type="KEGG" id="har:HEAR2188"/>
<dbReference type="eggNOG" id="COG0148">
    <property type="taxonomic scope" value="Bacteria"/>
</dbReference>
<dbReference type="HOGENOM" id="CLU_031223_2_1_4"/>
<dbReference type="OrthoDB" id="9804716at2"/>
<dbReference type="UniPathway" id="UPA00109">
    <property type="reaction ID" value="UER00187"/>
</dbReference>
<dbReference type="Proteomes" id="UP000006697">
    <property type="component" value="Chromosome"/>
</dbReference>
<dbReference type="GO" id="GO:0009986">
    <property type="term" value="C:cell surface"/>
    <property type="evidence" value="ECO:0007669"/>
    <property type="project" value="UniProtKB-SubCell"/>
</dbReference>
<dbReference type="GO" id="GO:0005576">
    <property type="term" value="C:extracellular region"/>
    <property type="evidence" value="ECO:0007669"/>
    <property type="project" value="UniProtKB-SubCell"/>
</dbReference>
<dbReference type="GO" id="GO:0000015">
    <property type="term" value="C:phosphopyruvate hydratase complex"/>
    <property type="evidence" value="ECO:0007669"/>
    <property type="project" value="InterPro"/>
</dbReference>
<dbReference type="GO" id="GO:0000287">
    <property type="term" value="F:magnesium ion binding"/>
    <property type="evidence" value="ECO:0007669"/>
    <property type="project" value="UniProtKB-UniRule"/>
</dbReference>
<dbReference type="GO" id="GO:0004634">
    <property type="term" value="F:phosphopyruvate hydratase activity"/>
    <property type="evidence" value="ECO:0007669"/>
    <property type="project" value="UniProtKB-UniRule"/>
</dbReference>
<dbReference type="GO" id="GO:0006096">
    <property type="term" value="P:glycolytic process"/>
    <property type="evidence" value="ECO:0007669"/>
    <property type="project" value="UniProtKB-UniRule"/>
</dbReference>
<dbReference type="CDD" id="cd03313">
    <property type="entry name" value="enolase"/>
    <property type="match status" value="1"/>
</dbReference>
<dbReference type="FunFam" id="3.20.20.120:FF:000001">
    <property type="entry name" value="Enolase"/>
    <property type="match status" value="1"/>
</dbReference>
<dbReference type="FunFam" id="3.30.390.10:FF:000001">
    <property type="entry name" value="Enolase"/>
    <property type="match status" value="1"/>
</dbReference>
<dbReference type="Gene3D" id="3.20.20.120">
    <property type="entry name" value="Enolase-like C-terminal domain"/>
    <property type="match status" value="1"/>
</dbReference>
<dbReference type="Gene3D" id="3.30.390.10">
    <property type="entry name" value="Enolase-like, N-terminal domain"/>
    <property type="match status" value="1"/>
</dbReference>
<dbReference type="HAMAP" id="MF_00318">
    <property type="entry name" value="Enolase"/>
    <property type="match status" value="1"/>
</dbReference>
<dbReference type="InterPro" id="IPR000941">
    <property type="entry name" value="Enolase"/>
</dbReference>
<dbReference type="InterPro" id="IPR036849">
    <property type="entry name" value="Enolase-like_C_sf"/>
</dbReference>
<dbReference type="InterPro" id="IPR029017">
    <property type="entry name" value="Enolase-like_N"/>
</dbReference>
<dbReference type="InterPro" id="IPR020810">
    <property type="entry name" value="Enolase_C"/>
</dbReference>
<dbReference type="InterPro" id="IPR020809">
    <property type="entry name" value="Enolase_CS"/>
</dbReference>
<dbReference type="InterPro" id="IPR020811">
    <property type="entry name" value="Enolase_N"/>
</dbReference>
<dbReference type="NCBIfam" id="TIGR01060">
    <property type="entry name" value="eno"/>
    <property type="match status" value="1"/>
</dbReference>
<dbReference type="PANTHER" id="PTHR11902">
    <property type="entry name" value="ENOLASE"/>
    <property type="match status" value="1"/>
</dbReference>
<dbReference type="PANTHER" id="PTHR11902:SF1">
    <property type="entry name" value="ENOLASE"/>
    <property type="match status" value="1"/>
</dbReference>
<dbReference type="Pfam" id="PF00113">
    <property type="entry name" value="Enolase_C"/>
    <property type="match status" value="1"/>
</dbReference>
<dbReference type="Pfam" id="PF03952">
    <property type="entry name" value="Enolase_N"/>
    <property type="match status" value="1"/>
</dbReference>
<dbReference type="PIRSF" id="PIRSF001400">
    <property type="entry name" value="Enolase"/>
    <property type="match status" value="1"/>
</dbReference>
<dbReference type="PRINTS" id="PR00148">
    <property type="entry name" value="ENOLASE"/>
</dbReference>
<dbReference type="SFLD" id="SFLDS00001">
    <property type="entry name" value="Enolase"/>
    <property type="match status" value="1"/>
</dbReference>
<dbReference type="SFLD" id="SFLDF00002">
    <property type="entry name" value="enolase"/>
    <property type="match status" value="1"/>
</dbReference>
<dbReference type="SMART" id="SM01192">
    <property type="entry name" value="Enolase_C"/>
    <property type="match status" value="1"/>
</dbReference>
<dbReference type="SMART" id="SM01193">
    <property type="entry name" value="Enolase_N"/>
    <property type="match status" value="1"/>
</dbReference>
<dbReference type="SUPFAM" id="SSF51604">
    <property type="entry name" value="Enolase C-terminal domain-like"/>
    <property type="match status" value="1"/>
</dbReference>
<dbReference type="SUPFAM" id="SSF54826">
    <property type="entry name" value="Enolase N-terminal domain-like"/>
    <property type="match status" value="1"/>
</dbReference>
<dbReference type="PROSITE" id="PS00164">
    <property type="entry name" value="ENOLASE"/>
    <property type="match status" value="1"/>
</dbReference>
<accession>A4G737</accession>
<evidence type="ECO:0000255" key="1">
    <source>
        <dbReference type="HAMAP-Rule" id="MF_00318"/>
    </source>
</evidence>
<sequence>MSAIVDIIGREIIDSRGNPTVECDVLLESGVMGRASVPSGASTGSREAIELRDGDKNRYFGKGVLKACENINTEISEAIMGLDANEQAFLDRTLIDLDGTDNKARLGANATLAVSMAVAKAAAEESGLPLYRYFGGSGAMQMPVPMMNVINGGAHANNNLDLQEFMIIPVGAPSFREAIRYGAEVFHTLKKIINDKGLPTSVGDEGGFAPSVENHEAAIKMILQAIEQAGYEPGTQIALGLDCAASEFYKDGKYHLAGEGMSLSSADFTNLLGTWCDKYPIISIEDGMAENDWDGWATLTNALGKKVQLVGDDLFVTNTKILREGIQKNVANSILIKINQIGTLTETFAAIEMAKRAGYTAVISHRSGETEDSTIADIAVGTNSLQIKTGSMSRSDRMAKYNQLLRIEEDLGDIASYPGRNAFYNLK</sequence>
<reference key="1">
    <citation type="journal article" date="2007" name="PLoS Genet.">
        <title>A tale of two oxidation states: bacterial colonization of arsenic-rich environments.</title>
        <authorList>
            <person name="Muller D."/>
            <person name="Medigue C."/>
            <person name="Koechler S."/>
            <person name="Barbe V."/>
            <person name="Barakat M."/>
            <person name="Talla E."/>
            <person name="Bonnefoy V."/>
            <person name="Krin E."/>
            <person name="Arsene-Ploetze F."/>
            <person name="Carapito C."/>
            <person name="Chandler M."/>
            <person name="Cournoyer B."/>
            <person name="Cruveiller S."/>
            <person name="Dossat C."/>
            <person name="Duval S."/>
            <person name="Heymann M."/>
            <person name="Leize E."/>
            <person name="Lieutaud A."/>
            <person name="Lievremont D."/>
            <person name="Makita Y."/>
            <person name="Mangenot S."/>
            <person name="Nitschke W."/>
            <person name="Ortet P."/>
            <person name="Perdrial N."/>
            <person name="Schoepp B."/>
            <person name="Siguier P."/>
            <person name="Simeonova D.D."/>
            <person name="Rouy Z."/>
            <person name="Segurens B."/>
            <person name="Turlin E."/>
            <person name="Vallenet D."/>
            <person name="van Dorsselaer A."/>
            <person name="Weiss S."/>
            <person name="Weissenbach J."/>
            <person name="Lett M.-C."/>
            <person name="Danchin A."/>
            <person name="Bertin P.N."/>
        </authorList>
    </citation>
    <scope>NUCLEOTIDE SEQUENCE [LARGE SCALE GENOMIC DNA]</scope>
    <source>
        <strain>ULPAs1</strain>
    </source>
</reference>
<name>ENO_HERAR</name>
<gene>
    <name evidence="1" type="primary">eno</name>
    <name type="ordered locus">HEAR2188</name>
</gene>
<feature type="chain" id="PRO_1000019213" description="Enolase">
    <location>
        <begin position="1"/>
        <end position="427"/>
    </location>
</feature>
<feature type="active site" description="Proton donor" evidence="1">
    <location>
        <position position="205"/>
    </location>
</feature>
<feature type="active site" description="Proton acceptor" evidence="1">
    <location>
        <position position="337"/>
    </location>
</feature>
<feature type="binding site" evidence="1">
    <location>
        <position position="163"/>
    </location>
    <ligand>
        <name>(2R)-2-phosphoglycerate</name>
        <dbReference type="ChEBI" id="CHEBI:58289"/>
    </ligand>
</feature>
<feature type="binding site" evidence="1">
    <location>
        <position position="242"/>
    </location>
    <ligand>
        <name>Mg(2+)</name>
        <dbReference type="ChEBI" id="CHEBI:18420"/>
    </ligand>
</feature>
<feature type="binding site" evidence="1">
    <location>
        <position position="285"/>
    </location>
    <ligand>
        <name>Mg(2+)</name>
        <dbReference type="ChEBI" id="CHEBI:18420"/>
    </ligand>
</feature>
<feature type="binding site" evidence="1">
    <location>
        <position position="312"/>
    </location>
    <ligand>
        <name>Mg(2+)</name>
        <dbReference type="ChEBI" id="CHEBI:18420"/>
    </ligand>
</feature>
<feature type="binding site" evidence="1">
    <location>
        <position position="337"/>
    </location>
    <ligand>
        <name>(2R)-2-phosphoglycerate</name>
        <dbReference type="ChEBI" id="CHEBI:58289"/>
    </ligand>
</feature>
<feature type="binding site" evidence="1">
    <location>
        <position position="366"/>
    </location>
    <ligand>
        <name>(2R)-2-phosphoglycerate</name>
        <dbReference type="ChEBI" id="CHEBI:58289"/>
    </ligand>
</feature>
<feature type="binding site" evidence="1">
    <location>
        <position position="367"/>
    </location>
    <ligand>
        <name>(2R)-2-phosphoglycerate</name>
        <dbReference type="ChEBI" id="CHEBI:58289"/>
    </ligand>
</feature>
<feature type="binding site" evidence="1">
    <location>
        <position position="388"/>
    </location>
    <ligand>
        <name>(2R)-2-phosphoglycerate</name>
        <dbReference type="ChEBI" id="CHEBI:58289"/>
    </ligand>
</feature>
<proteinExistence type="inferred from homology"/>
<keyword id="KW-0963">Cytoplasm</keyword>
<keyword id="KW-0324">Glycolysis</keyword>
<keyword id="KW-0456">Lyase</keyword>
<keyword id="KW-0460">Magnesium</keyword>
<keyword id="KW-0479">Metal-binding</keyword>
<keyword id="KW-1185">Reference proteome</keyword>
<keyword id="KW-0964">Secreted</keyword>
<protein>
    <recommendedName>
        <fullName evidence="1">Enolase</fullName>
        <ecNumber evidence="1">4.2.1.11</ecNumber>
    </recommendedName>
    <alternativeName>
        <fullName evidence="1">2-phospho-D-glycerate hydro-lyase</fullName>
    </alternativeName>
    <alternativeName>
        <fullName evidence="1">2-phosphoglycerate dehydratase</fullName>
    </alternativeName>
</protein>